<accession>B6EIM4</accession>
<organism>
    <name type="scientific">Aliivibrio salmonicida (strain LFI1238)</name>
    <name type="common">Vibrio salmonicida (strain LFI1238)</name>
    <dbReference type="NCBI Taxonomy" id="316275"/>
    <lineage>
        <taxon>Bacteria</taxon>
        <taxon>Pseudomonadati</taxon>
        <taxon>Pseudomonadota</taxon>
        <taxon>Gammaproteobacteria</taxon>
        <taxon>Vibrionales</taxon>
        <taxon>Vibrionaceae</taxon>
        <taxon>Aliivibrio</taxon>
    </lineage>
</organism>
<dbReference type="EC" id="1.5.1.5" evidence="1"/>
<dbReference type="EC" id="3.5.4.9" evidence="1"/>
<dbReference type="EMBL" id="FM178379">
    <property type="protein sequence ID" value="CAQ79894.1"/>
    <property type="molecule type" value="Genomic_DNA"/>
</dbReference>
<dbReference type="RefSeq" id="WP_012550725.1">
    <property type="nucleotide sequence ID" value="NC_011312.1"/>
</dbReference>
<dbReference type="SMR" id="B6EIM4"/>
<dbReference type="KEGG" id="vsa:VSAL_I2209"/>
<dbReference type="eggNOG" id="COG0190">
    <property type="taxonomic scope" value="Bacteria"/>
</dbReference>
<dbReference type="HOGENOM" id="CLU_034045_2_1_6"/>
<dbReference type="UniPathway" id="UPA00193"/>
<dbReference type="Proteomes" id="UP000001730">
    <property type="component" value="Chromosome 1"/>
</dbReference>
<dbReference type="GO" id="GO:0005829">
    <property type="term" value="C:cytosol"/>
    <property type="evidence" value="ECO:0007669"/>
    <property type="project" value="TreeGrafter"/>
</dbReference>
<dbReference type="GO" id="GO:0004477">
    <property type="term" value="F:methenyltetrahydrofolate cyclohydrolase activity"/>
    <property type="evidence" value="ECO:0007669"/>
    <property type="project" value="UniProtKB-UniRule"/>
</dbReference>
<dbReference type="GO" id="GO:0004488">
    <property type="term" value="F:methylenetetrahydrofolate dehydrogenase (NADP+) activity"/>
    <property type="evidence" value="ECO:0007669"/>
    <property type="project" value="UniProtKB-UniRule"/>
</dbReference>
<dbReference type="GO" id="GO:0000105">
    <property type="term" value="P:L-histidine biosynthetic process"/>
    <property type="evidence" value="ECO:0007669"/>
    <property type="project" value="UniProtKB-KW"/>
</dbReference>
<dbReference type="GO" id="GO:0009086">
    <property type="term" value="P:methionine biosynthetic process"/>
    <property type="evidence" value="ECO:0007669"/>
    <property type="project" value="UniProtKB-KW"/>
</dbReference>
<dbReference type="GO" id="GO:0006164">
    <property type="term" value="P:purine nucleotide biosynthetic process"/>
    <property type="evidence" value="ECO:0007669"/>
    <property type="project" value="UniProtKB-KW"/>
</dbReference>
<dbReference type="GO" id="GO:0035999">
    <property type="term" value="P:tetrahydrofolate interconversion"/>
    <property type="evidence" value="ECO:0007669"/>
    <property type="project" value="UniProtKB-UniRule"/>
</dbReference>
<dbReference type="CDD" id="cd01080">
    <property type="entry name" value="NAD_bind_m-THF_DH_Cyclohyd"/>
    <property type="match status" value="1"/>
</dbReference>
<dbReference type="FunFam" id="3.40.50.10860:FF:000001">
    <property type="entry name" value="Bifunctional protein FolD"/>
    <property type="match status" value="1"/>
</dbReference>
<dbReference type="FunFam" id="3.40.50.720:FF:000006">
    <property type="entry name" value="Bifunctional protein FolD"/>
    <property type="match status" value="1"/>
</dbReference>
<dbReference type="Gene3D" id="3.40.50.10860">
    <property type="entry name" value="Leucine Dehydrogenase, chain A, domain 1"/>
    <property type="match status" value="1"/>
</dbReference>
<dbReference type="Gene3D" id="3.40.50.720">
    <property type="entry name" value="NAD(P)-binding Rossmann-like Domain"/>
    <property type="match status" value="1"/>
</dbReference>
<dbReference type="HAMAP" id="MF_01576">
    <property type="entry name" value="THF_DHG_CYH"/>
    <property type="match status" value="1"/>
</dbReference>
<dbReference type="InterPro" id="IPR046346">
    <property type="entry name" value="Aminoacid_DH-like_N_sf"/>
</dbReference>
<dbReference type="InterPro" id="IPR036291">
    <property type="entry name" value="NAD(P)-bd_dom_sf"/>
</dbReference>
<dbReference type="InterPro" id="IPR000672">
    <property type="entry name" value="THF_DH/CycHdrlase"/>
</dbReference>
<dbReference type="InterPro" id="IPR020630">
    <property type="entry name" value="THF_DH/CycHdrlase_cat_dom"/>
</dbReference>
<dbReference type="InterPro" id="IPR020867">
    <property type="entry name" value="THF_DH/CycHdrlase_CS"/>
</dbReference>
<dbReference type="InterPro" id="IPR020631">
    <property type="entry name" value="THF_DH/CycHdrlase_NAD-bd_dom"/>
</dbReference>
<dbReference type="NCBIfam" id="NF008058">
    <property type="entry name" value="PRK10792.1"/>
    <property type="match status" value="1"/>
</dbReference>
<dbReference type="NCBIfam" id="NF010783">
    <property type="entry name" value="PRK14186.1"/>
    <property type="match status" value="1"/>
</dbReference>
<dbReference type="PANTHER" id="PTHR48099:SF5">
    <property type="entry name" value="C-1-TETRAHYDROFOLATE SYNTHASE, CYTOPLASMIC"/>
    <property type="match status" value="1"/>
</dbReference>
<dbReference type="PANTHER" id="PTHR48099">
    <property type="entry name" value="C-1-TETRAHYDROFOLATE SYNTHASE, CYTOPLASMIC-RELATED"/>
    <property type="match status" value="1"/>
</dbReference>
<dbReference type="Pfam" id="PF00763">
    <property type="entry name" value="THF_DHG_CYH"/>
    <property type="match status" value="1"/>
</dbReference>
<dbReference type="Pfam" id="PF02882">
    <property type="entry name" value="THF_DHG_CYH_C"/>
    <property type="match status" value="1"/>
</dbReference>
<dbReference type="PRINTS" id="PR00085">
    <property type="entry name" value="THFDHDRGNASE"/>
</dbReference>
<dbReference type="SUPFAM" id="SSF53223">
    <property type="entry name" value="Aminoacid dehydrogenase-like, N-terminal domain"/>
    <property type="match status" value="1"/>
</dbReference>
<dbReference type="SUPFAM" id="SSF51735">
    <property type="entry name" value="NAD(P)-binding Rossmann-fold domains"/>
    <property type="match status" value="1"/>
</dbReference>
<dbReference type="PROSITE" id="PS00766">
    <property type="entry name" value="THF_DHG_CYH_1"/>
    <property type="match status" value="1"/>
</dbReference>
<dbReference type="PROSITE" id="PS00767">
    <property type="entry name" value="THF_DHG_CYH_2"/>
    <property type="match status" value="1"/>
</dbReference>
<protein>
    <recommendedName>
        <fullName evidence="1">Bifunctional protein FolD</fullName>
    </recommendedName>
    <domain>
        <recommendedName>
            <fullName evidence="1">Methylenetetrahydrofolate dehydrogenase</fullName>
            <ecNumber evidence="1">1.5.1.5</ecNumber>
        </recommendedName>
    </domain>
    <domain>
        <recommendedName>
            <fullName evidence="1">Methenyltetrahydrofolate cyclohydrolase</fullName>
            <ecNumber evidence="1">3.5.4.9</ecNumber>
        </recommendedName>
    </domain>
</protein>
<proteinExistence type="inferred from homology"/>
<keyword id="KW-0028">Amino-acid biosynthesis</keyword>
<keyword id="KW-0368">Histidine biosynthesis</keyword>
<keyword id="KW-0378">Hydrolase</keyword>
<keyword id="KW-0486">Methionine biosynthesis</keyword>
<keyword id="KW-0511">Multifunctional enzyme</keyword>
<keyword id="KW-0521">NADP</keyword>
<keyword id="KW-0554">One-carbon metabolism</keyword>
<keyword id="KW-0560">Oxidoreductase</keyword>
<keyword id="KW-0658">Purine biosynthesis</keyword>
<evidence type="ECO:0000255" key="1">
    <source>
        <dbReference type="HAMAP-Rule" id="MF_01576"/>
    </source>
</evidence>
<comment type="function">
    <text evidence="1">Catalyzes the oxidation of 5,10-methylenetetrahydrofolate to 5,10-methenyltetrahydrofolate and then the hydrolysis of 5,10-methenyltetrahydrofolate to 10-formyltetrahydrofolate.</text>
</comment>
<comment type="catalytic activity">
    <reaction evidence="1">
        <text>(6R)-5,10-methylene-5,6,7,8-tetrahydrofolate + NADP(+) = (6R)-5,10-methenyltetrahydrofolate + NADPH</text>
        <dbReference type="Rhea" id="RHEA:22812"/>
        <dbReference type="ChEBI" id="CHEBI:15636"/>
        <dbReference type="ChEBI" id="CHEBI:57455"/>
        <dbReference type="ChEBI" id="CHEBI:57783"/>
        <dbReference type="ChEBI" id="CHEBI:58349"/>
        <dbReference type="EC" id="1.5.1.5"/>
    </reaction>
</comment>
<comment type="catalytic activity">
    <reaction evidence="1">
        <text>(6R)-5,10-methenyltetrahydrofolate + H2O = (6R)-10-formyltetrahydrofolate + H(+)</text>
        <dbReference type="Rhea" id="RHEA:23700"/>
        <dbReference type="ChEBI" id="CHEBI:15377"/>
        <dbReference type="ChEBI" id="CHEBI:15378"/>
        <dbReference type="ChEBI" id="CHEBI:57455"/>
        <dbReference type="ChEBI" id="CHEBI:195366"/>
        <dbReference type="EC" id="3.5.4.9"/>
    </reaction>
</comment>
<comment type="pathway">
    <text evidence="1">One-carbon metabolism; tetrahydrofolate interconversion.</text>
</comment>
<comment type="subunit">
    <text evidence="1">Homodimer.</text>
</comment>
<comment type="similarity">
    <text evidence="1">Belongs to the tetrahydrofolate dehydrogenase/cyclohydrolase family.</text>
</comment>
<name>FOLD_ALISL</name>
<reference key="1">
    <citation type="journal article" date="2008" name="BMC Genomics">
        <title>The genome sequence of the fish pathogen Aliivibrio salmonicida strain LFI1238 shows extensive evidence of gene decay.</title>
        <authorList>
            <person name="Hjerde E."/>
            <person name="Lorentzen M.S."/>
            <person name="Holden M.T."/>
            <person name="Seeger K."/>
            <person name="Paulsen S."/>
            <person name="Bason N."/>
            <person name="Churcher C."/>
            <person name="Harris D."/>
            <person name="Norbertczak H."/>
            <person name="Quail M.A."/>
            <person name="Sanders S."/>
            <person name="Thurston S."/>
            <person name="Parkhill J."/>
            <person name="Willassen N.P."/>
            <person name="Thomson N.R."/>
        </authorList>
    </citation>
    <scope>NUCLEOTIDE SEQUENCE [LARGE SCALE GENOMIC DNA]</scope>
    <source>
        <strain>LFI1238</strain>
    </source>
</reference>
<gene>
    <name evidence="1" type="primary">folD</name>
    <name type="ordered locus">VSAL_I2209</name>
</gene>
<sequence>MTAQIIDGKLISQTVRSEVGARVKARIEAGLRAPGLAVVLVGQDPASQVYVGSKRRACEEVGFVSKSYDLPTTTTEAELLTLIDTLNQDPEIDGILVQLPLPAGMDSTKILEHIDPEKDVDGFHPYNVGRLSQRIPKLRSCTPKGIITLLDRYNIQVRGMHAVVVGASNIVGRPMTLELLLAGCTTTTCHRFTKDLEHHIRQADLVVVAVGKPNFIPGEWIKEGAVVVDVGINRLDTGKLIGDVEFDVAKTKASYITPVPGGVGPMTVASLIENTLLACEQFHSK</sequence>
<feature type="chain" id="PRO_1000196748" description="Bifunctional protein FolD">
    <location>
        <begin position="1"/>
        <end position="285"/>
    </location>
</feature>
<feature type="binding site" evidence="1">
    <location>
        <begin position="166"/>
        <end position="168"/>
    </location>
    <ligand>
        <name>NADP(+)</name>
        <dbReference type="ChEBI" id="CHEBI:58349"/>
    </ligand>
</feature>
<feature type="binding site" evidence="1">
    <location>
        <position position="232"/>
    </location>
    <ligand>
        <name>NADP(+)</name>
        <dbReference type="ChEBI" id="CHEBI:58349"/>
    </ligand>
</feature>